<keyword id="KW-0067">ATP-binding</keyword>
<keyword id="KW-0143">Chaperone</keyword>
<keyword id="KW-0547">Nucleotide-binding</keyword>
<keyword id="KW-0597">Phosphoprotein</keyword>
<keyword id="KW-1185">Reference proteome</keyword>
<keyword id="KW-0346">Stress response</keyword>
<accession>A1B4E9</accession>
<evidence type="ECO:0000255" key="1">
    <source>
        <dbReference type="HAMAP-Rule" id="MF_00332"/>
    </source>
</evidence>
<evidence type="ECO:0000256" key="2">
    <source>
        <dbReference type="SAM" id="MobiDB-lite"/>
    </source>
</evidence>
<gene>
    <name evidence="1" type="primary">dnaK</name>
    <name type="ordered locus">Pden_2302</name>
</gene>
<name>DNAK_PARDP</name>
<organism>
    <name type="scientific">Paracoccus denitrificans (strain Pd 1222)</name>
    <dbReference type="NCBI Taxonomy" id="318586"/>
    <lineage>
        <taxon>Bacteria</taxon>
        <taxon>Pseudomonadati</taxon>
        <taxon>Pseudomonadota</taxon>
        <taxon>Alphaproteobacteria</taxon>
        <taxon>Rhodobacterales</taxon>
        <taxon>Paracoccaceae</taxon>
        <taxon>Paracoccus</taxon>
    </lineage>
</organism>
<feature type="chain" id="PRO_1000059623" description="Chaperone protein DnaK">
    <location>
        <begin position="1"/>
        <end position="638"/>
    </location>
</feature>
<feature type="region of interest" description="Disordered" evidence="2">
    <location>
        <begin position="603"/>
        <end position="638"/>
    </location>
</feature>
<feature type="compositionally biased region" description="Acidic residues" evidence="2">
    <location>
        <begin position="620"/>
        <end position="638"/>
    </location>
</feature>
<feature type="modified residue" description="Phosphothreonine; by autocatalysis" evidence="1">
    <location>
        <position position="197"/>
    </location>
</feature>
<protein>
    <recommendedName>
        <fullName evidence="1">Chaperone protein DnaK</fullName>
    </recommendedName>
    <alternativeName>
        <fullName evidence="1">HSP70</fullName>
    </alternativeName>
    <alternativeName>
        <fullName evidence="1">Heat shock 70 kDa protein</fullName>
    </alternativeName>
    <alternativeName>
        <fullName evidence="1">Heat shock protein 70</fullName>
    </alternativeName>
</protein>
<proteinExistence type="inferred from homology"/>
<comment type="function">
    <text evidence="1">Acts as a chaperone.</text>
</comment>
<comment type="induction">
    <text evidence="1">By stress conditions e.g. heat shock.</text>
</comment>
<comment type="similarity">
    <text evidence="1">Belongs to the heat shock protein 70 family.</text>
</comment>
<sequence length="638" mass="68693">MSKVIGIDLGTTNSCVAIMDGSQPKVIENSEGARTTPSIVAFTDSERLVGQPAKRQAVTNPSNTVFAVKRLIGRRTTDAEVEKDKKLVPYAIVDGGNGDAWVEVRGDKYSPSQISAFILQKMKETAESYLGEPVTQAVITVPAYFNDAQRQATKDAGKIAGLEVLRIINEPTAAALAYGLDKKDSKTIAVYDLGGGTFDITILEIDDGLFEVKSTNGDTFLGGEDFDMRIVNYLADEFKKEHGVDLTKDKMALQRLKEAAEKAKIELSSSSQTEINQPFISMDKDSGTPLHMVMKLTRAKLESLVGDLIKRTMKPVQDALKDAGMSKGDIDEIVLVGGMTRMPKVVEEVTAFFGKEPHKGVNPDEVVALGAAIQAGVLQGDVKDVVLLDVTPLSLGIETLGGVFTRLIDRNTTIPTKKSQIFSTAEDNQNAVTIRVFQGEREMAADNKLLGQFNLENIPPAPRGMPQIEVTFDIDANGIVSVSAKDKGTGKEQKITIQASGGLSDDEIDRMVKDAEANAEADKQRKELVEAKNQAESLIHTTKKSLEEHGDKVDGSTVEAIELAVGALEEALKSEDAGKIKGGIQNLMDASMKLGEAIYKASQAEAGTGDAEGEAGPRDVDDEIVDADFEDLGEDKRK</sequence>
<reference key="1">
    <citation type="submission" date="2006-12" db="EMBL/GenBank/DDBJ databases">
        <title>Complete sequence of chromosome 1 of Paracoccus denitrificans PD1222.</title>
        <authorList>
            <person name="Copeland A."/>
            <person name="Lucas S."/>
            <person name="Lapidus A."/>
            <person name="Barry K."/>
            <person name="Detter J.C."/>
            <person name="Glavina del Rio T."/>
            <person name="Hammon N."/>
            <person name="Israni S."/>
            <person name="Dalin E."/>
            <person name="Tice H."/>
            <person name="Pitluck S."/>
            <person name="Munk A.C."/>
            <person name="Brettin T."/>
            <person name="Bruce D."/>
            <person name="Han C."/>
            <person name="Tapia R."/>
            <person name="Gilna P."/>
            <person name="Schmutz J."/>
            <person name="Larimer F."/>
            <person name="Land M."/>
            <person name="Hauser L."/>
            <person name="Kyrpides N."/>
            <person name="Lykidis A."/>
            <person name="Spiro S."/>
            <person name="Richardson D.J."/>
            <person name="Moir J.W.B."/>
            <person name="Ferguson S.J."/>
            <person name="van Spanning R.J.M."/>
            <person name="Richardson P."/>
        </authorList>
    </citation>
    <scope>NUCLEOTIDE SEQUENCE [LARGE SCALE GENOMIC DNA]</scope>
    <source>
        <strain>Pd 1222</strain>
    </source>
</reference>
<dbReference type="EMBL" id="CP000489">
    <property type="protein sequence ID" value="ABL70393.1"/>
    <property type="molecule type" value="Genomic_DNA"/>
</dbReference>
<dbReference type="RefSeq" id="WP_011748586.1">
    <property type="nucleotide sequence ID" value="NC_008686.1"/>
</dbReference>
<dbReference type="SMR" id="A1B4E9"/>
<dbReference type="STRING" id="318586.Pden_2302"/>
<dbReference type="EnsemblBacteria" id="ABL70393">
    <property type="protein sequence ID" value="ABL70393"/>
    <property type="gene ID" value="Pden_2302"/>
</dbReference>
<dbReference type="GeneID" id="93450698"/>
<dbReference type="KEGG" id="pde:Pden_2302"/>
<dbReference type="eggNOG" id="COG0443">
    <property type="taxonomic scope" value="Bacteria"/>
</dbReference>
<dbReference type="HOGENOM" id="CLU_005965_2_1_5"/>
<dbReference type="OrthoDB" id="9766019at2"/>
<dbReference type="Proteomes" id="UP000000361">
    <property type="component" value="Chromosome 1"/>
</dbReference>
<dbReference type="GO" id="GO:0005524">
    <property type="term" value="F:ATP binding"/>
    <property type="evidence" value="ECO:0007669"/>
    <property type="project" value="UniProtKB-UniRule"/>
</dbReference>
<dbReference type="GO" id="GO:0140662">
    <property type="term" value="F:ATP-dependent protein folding chaperone"/>
    <property type="evidence" value="ECO:0007669"/>
    <property type="project" value="InterPro"/>
</dbReference>
<dbReference type="GO" id="GO:0051082">
    <property type="term" value="F:unfolded protein binding"/>
    <property type="evidence" value="ECO:0007669"/>
    <property type="project" value="InterPro"/>
</dbReference>
<dbReference type="CDD" id="cd11733">
    <property type="entry name" value="ASKHA_NBD_HSP70_HSPA9"/>
    <property type="match status" value="1"/>
</dbReference>
<dbReference type="FunFam" id="2.60.34.10:FF:000014">
    <property type="entry name" value="Chaperone protein DnaK HSP70"/>
    <property type="match status" value="1"/>
</dbReference>
<dbReference type="FunFam" id="1.20.1270.10:FF:000001">
    <property type="entry name" value="Molecular chaperone DnaK"/>
    <property type="match status" value="1"/>
</dbReference>
<dbReference type="FunFam" id="3.30.420.40:FF:000004">
    <property type="entry name" value="Molecular chaperone DnaK"/>
    <property type="match status" value="1"/>
</dbReference>
<dbReference type="FunFam" id="3.90.640.10:FF:000003">
    <property type="entry name" value="Molecular chaperone DnaK"/>
    <property type="match status" value="1"/>
</dbReference>
<dbReference type="Gene3D" id="1.20.1270.10">
    <property type="match status" value="1"/>
</dbReference>
<dbReference type="Gene3D" id="3.30.420.40">
    <property type="match status" value="2"/>
</dbReference>
<dbReference type="Gene3D" id="3.90.640.10">
    <property type="entry name" value="Actin, Chain A, domain 4"/>
    <property type="match status" value="1"/>
</dbReference>
<dbReference type="Gene3D" id="2.60.34.10">
    <property type="entry name" value="Substrate Binding Domain Of DNAk, Chain A, domain 1"/>
    <property type="match status" value="1"/>
</dbReference>
<dbReference type="HAMAP" id="MF_00332">
    <property type="entry name" value="DnaK"/>
    <property type="match status" value="1"/>
</dbReference>
<dbReference type="InterPro" id="IPR043129">
    <property type="entry name" value="ATPase_NBD"/>
</dbReference>
<dbReference type="InterPro" id="IPR012725">
    <property type="entry name" value="Chaperone_DnaK"/>
</dbReference>
<dbReference type="InterPro" id="IPR018181">
    <property type="entry name" value="Heat_shock_70_CS"/>
</dbReference>
<dbReference type="InterPro" id="IPR029048">
    <property type="entry name" value="HSP70_C_sf"/>
</dbReference>
<dbReference type="InterPro" id="IPR029047">
    <property type="entry name" value="HSP70_peptide-bd_sf"/>
</dbReference>
<dbReference type="InterPro" id="IPR013126">
    <property type="entry name" value="Hsp_70_fam"/>
</dbReference>
<dbReference type="NCBIfam" id="NF001413">
    <property type="entry name" value="PRK00290.1"/>
    <property type="match status" value="1"/>
</dbReference>
<dbReference type="NCBIfam" id="NF003520">
    <property type="entry name" value="PRK05183.1"/>
    <property type="match status" value="1"/>
</dbReference>
<dbReference type="NCBIfam" id="TIGR02350">
    <property type="entry name" value="prok_dnaK"/>
    <property type="match status" value="1"/>
</dbReference>
<dbReference type="PANTHER" id="PTHR19375">
    <property type="entry name" value="HEAT SHOCK PROTEIN 70KDA"/>
    <property type="match status" value="1"/>
</dbReference>
<dbReference type="Pfam" id="PF00012">
    <property type="entry name" value="HSP70"/>
    <property type="match status" value="1"/>
</dbReference>
<dbReference type="PRINTS" id="PR00301">
    <property type="entry name" value="HEATSHOCK70"/>
</dbReference>
<dbReference type="SUPFAM" id="SSF53067">
    <property type="entry name" value="Actin-like ATPase domain"/>
    <property type="match status" value="2"/>
</dbReference>
<dbReference type="SUPFAM" id="SSF100934">
    <property type="entry name" value="Heat shock protein 70kD (HSP70), C-terminal subdomain"/>
    <property type="match status" value="1"/>
</dbReference>
<dbReference type="SUPFAM" id="SSF100920">
    <property type="entry name" value="Heat shock protein 70kD (HSP70), peptide-binding domain"/>
    <property type="match status" value="1"/>
</dbReference>
<dbReference type="PROSITE" id="PS00297">
    <property type="entry name" value="HSP70_1"/>
    <property type="match status" value="1"/>
</dbReference>
<dbReference type="PROSITE" id="PS00329">
    <property type="entry name" value="HSP70_2"/>
    <property type="match status" value="1"/>
</dbReference>
<dbReference type="PROSITE" id="PS01036">
    <property type="entry name" value="HSP70_3"/>
    <property type="match status" value="1"/>
</dbReference>